<comment type="function">
    <text evidence="1 2 5 7 8 9">Component of the telomerase ribonucleoprotein (RNP) complex that is essential for the positive regulation of telomere length (PubMed:16107718, PubMed:17627276, PubMed:25697340). Binds RNA non-specifically (PubMed:27651456). Binds specifically single-stranded telomeric DNA (PubMed:16107718, PubMed:27651456). Not required to recruit telomerase to telomeres, but stimulates TER1 RNP repeat addition processivity (PubMed:25329641).</text>
</comment>
<comment type="subunit">
    <text evidence="3 4 7 8 10 11 12 13 18">Component of the telomerase holoenzyme complex at least composed of TERT, CBF5 and POT1a (Probable) (PubMed:18212040). The RNA molecule associated to the telomerase complex, and providing a template for telomeric DNA synthesis, is most likely TR and not TER1 as described previously (PubMed:31392988, PubMed:31754031, PubMed:31754033). Interacts with the N-terminal part of TERT (PubMed:17911168). Interacts with CBF5 (PubMed:18212040, PubMed:30834599). Interacts with CTC1 and STN1 (PubMed:25329641, PubMed:25697340). Does not interact with TEN1 (PubMed:25329641).</text>
</comment>
<comment type="interaction">
    <interactant intactId="EBI-1606062">
        <id>Q56Y52</id>
    </interactant>
    <interactant intactId="EBI-1606133">
        <id>Q9SPU7</id>
        <label>TERT</label>
    </interactant>
    <organismsDiffer>false</organismsDiffer>
    <experiments>4</experiments>
</comment>
<comment type="subcellular location">
    <subcellularLocation>
        <location evidence="17">Nucleus</location>
    </subcellularLocation>
    <subcellularLocation>
        <location evidence="2">Chromosome</location>
        <location evidence="2">Telomere</location>
    </subcellularLocation>
    <subcellularLocation>
        <location evidence="10">Nucleus</location>
        <location evidence="10">Nucleolus</location>
    </subcellularLocation>
    <subcellularLocation>
        <location evidence="10">Cytoplasm</location>
    </subcellularLocation>
    <text evidence="2 10">Localizes to telomeres in S-phase (PubMed:17627276). Localizes to cytoplasmic foci (PubMed:30834599).</text>
</comment>
<comment type="alternative products">
    <event type="alternative splicing"/>
    <isoform>
        <id>Q56Y52-1</id>
        <name>1</name>
        <sequence type="displayed"/>
    </isoform>
    <isoform>
        <id>Q56Y52-2</id>
        <name>2</name>
        <sequence type="described" ref="VSP_043057 VSP_043059"/>
    </isoform>
    <isoform>
        <id>Q56Y52-3</id>
        <name>3</name>
        <sequence type="described" ref="VSP_043058 VSP_043059"/>
    </isoform>
</comment>
<comment type="tissue specificity">
    <text evidence="1">Expressed in roots, rosette leaves, cauline leaves, stems and flowers.</text>
</comment>
<comment type="similarity">
    <text evidence="16">Belongs to the telombin family.</text>
</comment>
<comment type="caution">
    <text evidence="6 11 12 19">Was originally thought to associate with TER1, the RNA molecule of the telomerase complex that provides a template for telomeric DNA synthesis (PubMed:21164032). The authentic RNA subunit of the telomerase that associates with POT1A has been recently shown to be TR and not TER1 (PubMed:31392988, PubMed:31754031). The original publication has been retracted.</text>
</comment>
<comment type="sequence caution" evidence="16">
    <conflict type="erroneous gene model prediction">
        <sequence resource="EMBL-CDS" id="AAD29059"/>
    </conflict>
</comment>
<proteinExistence type="evidence at protein level"/>
<evidence type="ECO:0000269" key="1">
    <source>
    </source>
</evidence>
<evidence type="ECO:0000269" key="2">
    <source>
    </source>
</evidence>
<evidence type="ECO:0000269" key="3">
    <source>
    </source>
</evidence>
<evidence type="ECO:0000269" key="4">
    <source>
    </source>
</evidence>
<evidence type="ECO:0000269" key="5">
    <source>
    </source>
</evidence>
<evidence type="ECO:0000269" key="6">
    <source>
    </source>
</evidence>
<evidence type="ECO:0000269" key="7">
    <source>
    </source>
</evidence>
<evidence type="ECO:0000269" key="8">
    <source>
    </source>
</evidence>
<evidence type="ECO:0000269" key="9">
    <source>
    </source>
</evidence>
<evidence type="ECO:0000269" key="10">
    <source>
    </source>
</evidence>
<evidence type="ECO:0000269" key="11">
    <source>
    </source>
</evidence>
<evidence type="ECO:0000269" key="12">
    <source>
    </source>
</evidence>
<evidence type="ECO:0000269" key="13">
    <source>
    </source>
</evidence>
<evidence type="ECO:0000303" key="14">
    <source>
    </source>
</evidence>
<evidence type="ECO:0000303" key="15">
    <source>
    </source>
</evidence>
<evidence type="ECO:0000305" key="16"/>
<evidence type="ECO:0000305" key="17">
    <source>
    </source>
</evidence>
<evidence type="ECO:0000305" key="18">
    <source>
    </source>
</evidence>
<evidence type="ECO:0000305" key="19">
    <source>
    </source>
</evidence>
<evidence type="ECO:0000312" key="20">
    <source>
        <dbReference type="Araport" id="AT2G05210"/>
    </source>
</evidence>
<dbReference type="EMBL" id="AY553323">
    <property type="protein sequence ID" value="AAS59561.1"/>
    <property type="molecule type" value="mRNA"/>
</dbReference>
<dbReference type="EMBL" id="AB195819">
    <property type="protein sequence ID" value="BAD99146.1"/>
    <property type="molecule type" value="Genomic_DNA"/>
</dbReference>
<dbReference type="EMBL" id="AB195819">
    <property type="protein sequence ID" value="BAD99147.1"/>
    <property type="molecule type" value="Genomic_DNA"/>
</dbReference>
<dbReference type="EMBL" id="AB195819">
    <property type="protein sequence ID" value="BAD99148.1"/>
    <property type="molecule type" value="Genomic_DNA"/>
</dbReference>
<dbReference type="EMBL" id="AY884593">
    <property type="protein sequence ID" value="AAX78213.2"/>
    <property type="molecule type" value="mRNA"/>
</dbReference>
<dbReference type="EMBL" id="AC007018">
    <property type="protein sequence ID" value="AAD29059.1"/>
    <property type="status" value="ALT_SEQ"/>
    <property type="molecule type" value="Genomic_DNA"/>
</dbReference>
<dbReference type="EMBL" id="CP002685">
    <property type="protein sequence ID" value="AEC05904.1"/>
    <property type="molecule type" value="Genomic_DNA"/>
</dbReference>
<dbReference type="EMBL" id="CP002685">
    <property type="protein sequence ID" value="AEC05905.1"/>
    <property type="molecule type" value="Genomic_DNA"/>
</dbReference>
<dbReference type="EMBL" id="CP002685">
    <property type="protein sequence ID" value="AEC05906.1"/>
    <property type="molecule type" value="Genomic_DNA"/>
</dbReference>
<dbReference type="EMBL" id="AK221471">
    <property type="protein sequence ID" value="BAD94597.1"/>
    <property type="molecule type" value="mRNA"/>
</dbReference>
<dbReference type="PIR" id="A84466">
    <property type="entry name" value="A84466"/>
</dbReference>
<dbReference type="RefSeq" id="NP_001118270.1">
    <molecule id="Q56Y52-1"/>
    <property type="nucleotide sequence ID" value="NM_001124798.2"/>
</dbReference>
<dbReference type="RefSeq" id="NP_001118271.1">
    <molecule id="Q56Y52-1"/>
    <property type="nucleotide sequence ID" value="NM_001124799.2"/>
</dbReference>
<dbReference type="RefSeq" id="NP_178592.3">
    <molecule id="Q56Y52-1"/>
    <property type="nucleotide sequence ID" value="NM_126547.5"/>
</dbReference>
<dbReference type="SMR" id="Q56Y52"/>
<dbReference type="BioGRID" id="469">
    <property type="interactions" value="40"/>
</dbReference>
<dbReference type="FunCoup" id="Q56Y52">
    <property type="interactions" value="98"/>
</dbReference>
<dbReference type="IntAct" id="Q56Y52">
    <property type="interactions" value="4"/>
</dbReference>
<dbReference type="STRING" id="3702.Q56Y52"/>
<dbReference type="PaxDb" id="3702-AT2G05210.2"/>
<dbReference type="ProMEX" id="Q56Y52"/>
<dbReference type="EnsemblPlants" id="AT2G05210.1">
    <molecule id="Q56Y52-1"/>
    <property type="protein sequence ID" value="AT2G05210.1"/>
    <property type="gene ID" value="AT2G05210"/>
</dbReference>
<dbReference type="EnsemblPlants" id="AT2G05210.2">
    <molecule id="Q56Y52-1"/>
    <property type="protein sequence ID" value="AT2G05210.2"/>
    <property type="gene ID" value="AT2G05210"/>
</dbReference>
<dbReference type="EnsemblPlants" id="AT2G05210.3">
    <molecule id="Q56Y52-1"/>
    <property type="protein sequence ID" value="AT2G05210.3"/>
    <property type="gene ID" value="AT2G05210"/>
</dbReference>
<dbReference type="Gramene" id="AT2G05210.1">
    <molecule id="Q56Y52-1"/>
    <property type="protein sequence ID" value="AT2G05210.1"/>
    <property type="gene ID" value="AT2G05210"/>
</dbReference>
<dbReference type="Gramene" id="AT2G05210.2">
    <molecule id="Q56Y52-1"/>
    <property type="protein sequence ID" value="AT2G05210.2"/>
    <property type="gene ID" value="AT2G05210"/>
</dbReference>
<dbReference type="Gramene" id="AT2G05210.3">
    <molecule id="Q56Y52-1"/>
    <property type="protein sequence ID" value="AT2G05210.3"/>
    <property type="gene ID" value="AT2G05210"/>
</dbReference>
<dbReference type="KEGG" id="ath:AT2G05210"/>
<dbReference type="Araport" id="AT2G05210"/>
<dbReference type="TAIR" id="AT2G05210">
    <property type="gene designation" value="ATPOT1A"/>
</dbReference>
<dbReference type="eggNOG" id="KOG4757">
    <property type="taxonomic scope" value="Eukaryota"/>
</dbReference>
<dbReference type="HOGENOM" id="CLU_020958_0_1_1"/>
<dbReference type="InParanoid" id="Q56Y52"/>
<dbReference type="OMA" id="FRCEERY"/>
<dbReference type="PhylomeDB" id="Q56Y52"/>
<dbReference type="PRO" id="PR:Q56Y52"/>
<dbReference type="Proteomes" id="UP000006548">
    <property type="component" value="Chromosome 2"/>
</dbReference>
<dbReference type="ExpressionAtlas" id="Q56Y52">
    <property type="expression patterns" value="baseline and differential"/>
</dbReference>
<dbReference type="GO" id="GO:0000781">
    <property type="term" value="C:chromosome, telomeric region"/>
    <property type="evidence" value="ECO:0007669"/>
    <property type="project" value="UniProtKB-SubCell"/>
</dbReference>
<dbReference type="GO" id="GO:0005737">
    <property type="term" value="C:cytoplasm"/>
    <property type="evidence" value="ECO:0007669"/>
    <property type="project" value="UniProtKB-SubCell"/>
</dbReference>
<dbReference type="GO" id="GO:0005730">
    <property type="term" value="C:nucleolus"/>
    <property type="evidence" value="ECO:0007669"/>
    <property type="project" value="UniProtKB-SubCell"/>
</dbReference>
<dbReference type="GO" id="GO:0003723">
    <property type="term" value="F:RNA binding"/>
    <property type="evidence" value="ECO:0000314"/>
    <property type="project" value="TAIR"/>
</dbReference>
<dbReference type="GO" id="GO:0043047">
    <property type="term" value="F:single-stranded telomeric DNA binding"/>
    <property type="evidence" value="ECO:0000304"/>
    <property type="project" value="UniProtKB"/>
</dbReference>
<dbReference type="GO" id="GO:0042162">
    <property type="term" value="F:telomeric DNA binding"/>
    <property type="evidence" value="ECO:0000314"/>
    <property type="project" value="TAIR"/>
</dbReference>
<dbReference type="GO" id="GO:0032206">
    <property type="term" value="P:positive regulation of telomere maintenance"/>
    <property type="evidence" value="ECO:0000315"/>
    <property type="project" value="UniProtKB"/>
</dbReference>
<dbReference type="GO" id="GO:0032212">
    <property type="term" value="P:positive regulation of telomere maintenance via telomerase"/>
    <property type="evidence" value="ECO:0000315"/>
    <property type="project" value="UniProtKB"/>
</dbReference>
<dbReference type="GO" id="GO:0000723">
    <property type="term" value="P:telomere maintenance"/>
    <property type="evidence" value="ECO:0000315"/>
    <property type="project" value="TAIR"/>
</dbReference>
<dbReference type="CDD" id="cd04497">
    <property type="entry name" value="hPOT1_OB1_like"/>
    <property type="match status" value="1"/>
</dbReference>
<dbReference type="Gene3D" id="2.40.50.140">
    <property type="entry name" value="Nucleic acid-binding proteins"/>
    <property type="match status" value="1"/>
</dbReference>
<dbReference type="InterPro" id="IPR012340">
    <property type="entry name" value="NA-bd_OB-fold"/>
</dbReference>
<dbReference type="InterPro" id="IPR028389">
    <property type="entry name" value="POT1"/>
</dbReference>
<dbReference type="InterPro" id="IPR011564">
    <property type="entry name" value="Telomer_end-bd_POT1/Cdc13"/>
</dbReference>
<dbReference type="PANTHER" id="PTHR14513">
    <property type="entry name" value="PROTECTION OF TELOMERES 1"/>
    <property type="match status" value="1"/>
</dbReference>
<dbReference type="PANTHER" id="PTHR14513:SF0">
    <property type="entry name" value="PROTECTION OF TELOMERES PROTEIN 1"/>
    <property type="match status" value="1"/>
</dbReference>
<dbReference type="Pfam" id="PF25507">
    <property type="entry name" value="OB_POT1A"/>
    <property type="match status" value="1"/>
</dbReference>
<dbReference type="Pfam" id="PF02765">
    <property type="entry name" value="POT1"/>
    <property type="match status" value="1"/>
</dbReference>
<dbReference type="SMART" id="SM00976">
    <property type="entry name" value="Telo_bind"/>
    <property type="match status" value="1"/>
</dbReference>
<dbReference type="SUPFAM" id="SSF50249">
    <property type="entry name" value="Nucleic acid-binding proteins"/>
    <property type="match status" value="2"/>
</dbReference>
<feature type="chain" id="PRO_0000416957" description="Protection of telomeres protein 1a">
    <location>
        <begin position="1"/>
        <end position="467"/>
    </location>
</feature>
<feature type="splice variant" id="VSP_043057" description="In isoform 2." evidence="16">
    <original>ILHADEDTSAVFVW</original>
    <variation>VICSILSINYSPCR</variation>
    <location>
        <begin position="186"/>
        <end position="199"/>
    </location>
</feature>
<feature type="splice variant" id="VSP_043058" description="In isoform 3." evidence="16">
    <original>ILHADEDTSAVFVW</original>
    <variation>VICSILSINCEKAF</variation>
    <location>
        <begin position="186"/>
        <end position="199"/>
    </location>
</feature>
<feature type="splice variant" id="VSP_043059" description="In isoform 2 and isoform 3." evidence="16">
    <location>
        <begin position="200"/>
        <end position="467"/>
    </location>
</feature>
<feature type="mutagenesis site" description="Reduces POT1A function in positive regulation of telomere length; reduces binding affinity for CTC1; has no effect on binding affinity for STN1." evidence="8">
    <original>E</original>
    <variation>F</variation>
    <location>
        <position position="35"/>
    </location>
</feature>
<feature type="mutagenesis site" description="Almost abolishes POT1A function in positive regulation of telomere length; abolishes telomeric DNA binding." evidence="8 9">
    <original>F</original>
    <variation>A</variation>
    <location>
        <position position="65"/>
    </location>
</feature>
<feature type="mutagenesis site" description="Has no effect on POT1A function in positive regulation of telomere length; has no effect on binding affinity for CTC1." evidence="8">
    <original>L</original>
    <variation>D</variation>
    <location>
        <position position="132"/>
    </location>
</feature>
<feature type="mutagenesis site" description="Reduces POT1A function in positive regulation of telomere length; reduces binding affinity for CTC1; has no effect on binding affinity for STN1." evidence="8">
    <original>S</original>
    <variation>A</variation>
    <location>
        <position position="221"/>
    </location>
</feature>
<feature type="mutagenesis site" description="Has minor effect on POT1A function in positive regulation of telomere length, reduces binding affinity for CTC1; has no effect on binding affinity for STN1." evidence="8">
    <original>E</original>
    <variation>F</variation>
    <location>
        <position position="297"/>
    </location>
</feature>
<feature type="mutagenesis site" description="Abolishes POT1A function in positive regulation of telomere length." evidence="8">
    <location>
        <begin position="458"/>
        <end position="467"/>
    </location>
</feature>
<feature type="sequence conflict" description="In Ref. 1; AAS59561." evidence="16" ref="1">
    <original>D</original>
    <variation>G</variation>
    <location>
        <position position="292"/>
    </location>
</feature>
<accession>Q56Y52</accession>
<accession>Q4W6W9</accession>
<accession>Q4W6X0</accession>
<accession>Q52VR7</accession>
<accession>Q6Q835</accession>
<accession>Q9SJ37</accession>
<keyword id="KW-0025">Alternative splicing</keyword>
<keyword id="KW-0158">Chromosome</keyword>
<keyword id="KW-0963">Cytoplasm</keyword>
<keyword id="KW-0238">DNA-binding</keyword>
<keyword id="KW-0539">Nucleus</keyword>
<keyword id="KW-1185">Reference proteome</keyword>
<keyword id="KW-0694">RNA-binding</keyword>
<keyword id="KW-0779">Telomere</keyword>
<gene>
    <name evidence="15" type="primary">POT1A</name>
    <name evidence="14" type="synonym">POT1</name>
    <name evidence="20" type="ordered locus">At2g05210</name>
    <name type="ORF">F5G3</name>
</gene>
<organism>
    <name type="scientific">Arabidopsis thaliana</name>
    <name type="common">Mouse-ear cress</name>
    <dbReference type="NCBI Taxonomy" id="3702"/>
    <lineage>
        <taxon>Eukaryota</taxon>
        <taxon>Viridiplantae</taxon>
        <taxon>Streptophyta</taxon>
        <taxon>Embryophyta</taxon>
        <taxon>Tracheophyta</taxon>
        <taxon>Spermatophyta</taxon>
        <taxon>Magnoliopsida</taxon>
        <taxon>eudicotyledons</taxon>
        <taxon>Gunneridae</taxon>
        <taxon>Pentapetalae</taxon>
        <taxon>rosids</taxon>
        <taxon>malvids</taxon>
        <taxon>Brassicales</taxon>
        <taxon>Brassicaceae</taxon>
        <taxon>Camelineae</taxon>
        <taxon>Arabidopsis</taxon>
    </lineage>
</organism>
<sequence>MAKKRESPKLIKIKDAIKLINQQVSLIGIVLEQREPKQCRNNDWICTLRIIDDTYPSPGLTVNVFSKTLEQLPQIKNHDDMILFTRIKMQTFDSGERVNAACSRWVSSFALFEGVDFVCYQCSTNFHEEEALYKSAMDDLRKVFAGCSQVIKAMQSISYRTKPCSEVFSFLREIKIGKRFDLVCRILHADEDTSAVFVWDGTDAPPASILAKRSEEDKAFSSLSVHTLLSRDVLLSFPTVGTILRVHLSSHLFYRVKPGDWVKLYHLLCEVDRGSWVIKVTSSTKVHHLAQDDRLVEKIMRIYDKRLSSKLGHISFWCFPSPPGLTETDDNCAPFVTLMDIITFPKVTCKYRCIVRVVAAYPWQVEDFCSDENRRHHQVLLTLEDSTATLEAFLCNKDAEYFWGLGFQDTETLRKKRNWLLGIRESSNFVAPRNPPWIECCILSYYTNKADPWNTRLYRIFGTRLLH</sequence>
<protein>
    <recommendedName>
        <fullName evidence="15">Protection of telomeres protein 1a</fullName>
        <shortName evidence="15">AtPOT1a</shortName>
        <shortName evidence="14">AtPot1</shortName>
    </recommendedName>
    <alternativeName>
        <fullName evidence="14">Protection of telomeres protein 1</fullName>
    </alternativeName>
</protein>
<name>POT1A_ARATH</name>
<reference key="1">
    <citation type="journal article" date="2004" name="FEBS Lett.">
        <title>Interactions of putative telomere-binding proteins in Arabidopsis thaliana: identification of functional TRF2 homolog in plants.</title>
        <authorList>
            <person name="Kuchar M."/>
            <person name="Fajkus J."/>
        </authorList>
    </citation>
    <scope>NUCLEOTIDE SEQUENCE [MRNA] (ISOFORM 1)</scope>
</reference>
<reference key="2">
    <citation type="journal article" date="2005" name="Genes Genet. Syst.">
        <title>Alternative splicing of Pot1 (Protection of telomere)-like genes in Arabidopsis thaliana.</title>
        <authorList>
            <person name="Tani A."/>
            <person name="Murata M."/>
        </authorList>
    </citation>
    <scope>NUCLEOTIDE SEQUENCE [GENOMIC DNA]</scope>
    <scope>ALTERNATIVE SPLICING (ISOFORMS 1; 2 AND 3)</scope>
    <source>
        <strain>cv. Columbia</strain>
    </source>
</reference>
<reference key="3">
    <citation type="journal article" date="2005" name="Mol. Cell. Biol.">
        <title>The Arabidopsis Pot1 and Pot2 proteins function in telomere length homeostasis and chromosome end protection.</title>
        <authorList>
            <person name="Shakirov E.V."/>
            <person name="Surovtseva Y.V."/>
            <person name="Osbun N."/>
            <person name="Shippen D.E."/>
        </authorList>
    </citation>
    <scope>NUCLEOTIDE SEQUENCE [MRNA] (ISOFORM 1)</scope>
    <scope>FUNCTION</scope>
    <scope>TISSUE SPECIFICITY</scope>
</reference>
<reference key="4">
    <citation type="journal article" date="1999" name="Nature">
        <title>Sequence and analysis of chromosome 2 of the plant Arabidopsis thaliana.</title>
        <authorList>
            <person name="Lin X."/>
            <person name="Kaul S."/>
            <person name="Rounsley S.D."/>
            <person name="Shea T.P."/>
            <person name="Benito M.-I."/>
            <person name="Town C.D."/>
            <person name="Fujii C.Y."/>
            <person name="Mason T.M."/>
            <person name="Bowman C.L."/>
            <person name="Barnstead M.E."/>
            <person name="Feldblyum T.V."/>
            <person name="Buell C.R."/>
            <person name="Ketchum K.A."/>
            <person name="Lee J.J."/>
            <person name="Ronning C.M."/>
            <person name="Koo H.L."/>
            <person name="Moffat K.S."/>
            <person name="Cronin L.A."/>
            <person name="Shen M."/>
            <person name="Pai G."/>
            <person name="Van Aken S."/>
            <person name="Umayam L."/>
            <person name="Tallon L.J."/>
            <person name="Gill J.E."/>
            <person name="Adams M.D."/>
            <person name="Carrera A.J."/>
            <person name="Creasy T.H."/>
            <person name="Goodman H.M."/>
            <person name="Somerville C.R."/>
            <person name="Copenhaver G.P."/>
            <person name="Preuss D."/>
            <person name="Nierman W.C."/>
            <person name="White O."/>
            <person name="Eisen J.A."/>
            <person name="Salzberg S.L."/>
            <person name="Fraser C.M."/>
            <person name="Venter J.C."/>
        </authorList>
    </citation>
    <scope>NUCLEOTIDE SEQUENCE [LARGE SCALE GENOMIC DNA]</scope>
    <source>
        <strain>cv. Columbia</strain>
    </source>
</reference>
<reference key="5">
    <citation type="journal article" date="2017" name="Plant J.">
        <title>Araport11: a complete reannotation of the Arabidopsis thaliana reference genome.</title>
        <authorList>
            <person name="Cheng C.Y."/>
            <person name="Krishnakumar V."/>
            <person name="Chan A.P."/>
            <person name="Thibaud-Nissen F."/>
            <person name="Schobel S."/>
            <person name="Town C.D."/>
        </authorList>
    </citation>
    <scope>GENOME REANNOTATION</scope>
    <source>
        <strain>cv. Columbia</strain>
    </source>
</reference>
<reference key="6">
    <citation type="submission" date="2005-03" db="EMBL/GenBank/DDBJ databases">
        <title>Large-scale analysis of RIKEN Arabidopsis full-length (RAFL) cDNAs.</title>
        <authorList>
            <person name="Totoki Y."/>
            <person name="Seki M."/>
            <person name="Ishida J."/>
            <person name="Nakajima M."/>
            <person name="Enju A."/>
            <person name="Kamiya A."/>
            <person name="Narusaka M."/>
            <person name="Shin-i T."/>
            <person name="Nakagawa M."/>
            <person name="Sakamoto N."/>
            <person name="Oishi K."/>
            <person name="Kohara Y."/>
            <person name="Kobayashi M."/>
            <person name="Toyoda A."/>
            <person name="Sakaki Y."/>
            <person name="Sakurai T."/>
            <person name="Iida K."/>
            <person name="Akiyama K."/>
            <person name="Satou M."/>
            <person name="Toyoda T."/>
            <person name="Konagaya A."/>
            <person name="Carninci P."/>
            <person name="Kawai J."/>
            <person name="Hayashizaki Y."/>
            <person name="Shinozaki K."/>
        </authorList>
    </citation>
    <scope>NUCLEOTIDE SEQUENCE [LARGE SCALE MRNA] (ISOFORM 1)</scope>
    <source>
        <strain>cv. Columbia</strain>
    </source>
</reference>
<reference key="7">
    <citation type="journal article" date="2007" name="EMBO J.">
        <title>Arabidopsis POT1 associates with the telomerase RNP and is required for telomere maintenance.</title>
        <authorList>
            <person name="Surovtseva Y.V."/>
            <person name="Shakirov E.V."/>
            <person name="Vespa L."/>
            <person name="Osbun N."/>
            <person name="Song X."/>
            <person name="Shippen D.E."/>
        </authorList>
    </citation>
    <scope>FUNCTION</scope>
    <scope>COMPONENT OF THE TELOMERASE COMPLEX</scope>
    <scope>SUBCELLULAR LOCATION</scope>
</reference>
<reference key="8">
    <citation type="journal article" date="2007" name="J. Cell Sci.">
        <title>Arabidopsis POT1A interacts with TERT-V(I8), an N-terminal splicing variant of telomerase.</title>
        <authorList>
            <person name="Rossignol P."/>
            <person name="Collier S."/>
            <person name="Bush M."/>
            <person name="Shaw P."/>
            <person name="Doonan J.H."/>
        </authorList>
    </citation>
    <scope>INTERACTION WITH TERT</scope>
</reference>
<reference key="9">
    <citation type="journal article" date="2008" name="Mol. Cell. Biol.">
        <title>Dyskerin is a component of the Arabidopsis telomerase RNP required for telomere maintenance.</title>
        <authorList>
            <person name="Kannan K."/>
            <person name="Nelson A.D."/>
            <person name="Shippen D.E."/>
        </authorList>
    </citation>
    <scope>INTERACTION WITH CBF5</scope>
    <scope>COMPONENT OF THE TELOMERASE COMPLEX</scope>
</reference>
<reference key="10">
    <citation type="journal article" date="2009" name="Plant J.">
        <title>POT1-independent single-strand telomeric DNA binding activities in Brassicaceae.</title>
        <authorList>
            <person name="Shakirov E.V."/>
            <person name="McKnight T.D."/>
            <person name="Shippen D.E."/>
        </authorList>
    </citation>
    <scope>FUNCTION</scope>
</reference>
<reference key="11">
    <citation type="journal article" date="2011" name="Proc. Natl. Acad. Sci. U.S.A.">
        <title>Two RNA subunits and POT1a are components of Arabidopsis telomerase.</title>
        <authorList>
            <person name="Cifuentes-Rojas C."/>
            <person name="Kannan K."/>
            <person name="Tseng L."/>
            <person name="Shippen D.E."/>
        </authorList>
    </citation>
    <scope>FUNCTION</scope>
    <scope>RNA-BINDING</scope>
    <scope>RETRACTED PAPER</scope>
</reference>
<reference key="12">
    <citation type="journal article" date="2019" name="Proc. Natl. Acad. Sci. U.S.A.">
        <title>Retraction for Cifuentes-Rojas et al., Two RNA subunits and POT1a are components of Arabidopsis telomerase.</title>
        <authorList>
            <person name="Cifuentes-Rojas C."/>
            <person name="Kannan K."/>
            <person name="Tseng L."/>
            <person name="Shippen D.E."/>
        </authorList>
    </citation>
    <scope>RETRACTION NOTICE OF PUBMED:21164032</scope>
    <scope>CAUTION</scope>
</reference>
<reference key="13">
    <citation type="journal article" date="2014" name="PLoS Genet.">
        <title>POT1a and components of CST engage telomerase and regulate its activity in Arabidopsis.</title>
        <authorList>
            <person name="Renfrew K.B."/>
            <person name="Song X."/>
            <person name="Lee J.R."/>
            <person name="Arora A."/>
            <person name="Shippen D.E."/>
        </authorList>
    </citation>
    <scope>FUNCTION</scope>
    <scope>INTERACTION WITH CTC1; STN1 AND TEN1</scope>
</reference>
<reference key="14">
    <citation type="journal article" date="2015" name="Mol. Biol. Evol.">
        <title>Evolution of the telomere-associated protein POT1a in Arabidopsis thaliana is characterized by positive selection to reinforce protein-protein interaction.</title>
        <authorList>
            <person name="Beilstein M.A."/>
            <person name="Renfrew K.B."/>
            <person name="Song X."/>
            <person name="Shakirov E.V."/>
            <person name="Zanis M.J."/>
            <person name="Shippen D.E."/>
        </authorList>
    </citation>
    <scope>FUNCTION</scope>
    <scope>INTERACTION WITH CTC1 AND STN1</scope>
    <scope>MUTAGENESIS OF GLU-35; PHE-65; LEU-132; SER-221; GLU-297 AND 458-TYR--HIS-467</scope>
</reference>
<reference key="15">
    <citation type="journal article" date="2016" name="Nucleic Acids Res.">
        <title>Evolution of Arabidopsis protection of telomeres 1 alters nucleic acid recognition and telomerase regulation.</title>
        <authorList>
            <person name="Arora A."/>
            <person name="Beilstein M.A."/>
            <person name="Shippen D.E."/>
        </authorList>
    </citation>
    <scope>FUNCTION</scope>
    <scope>MUTAGENESIS OF PHE-65</scope>
</reference>
<reference key="16">
    <citation type="journal article" date="2019" name="Nucleic Acids Res.">
        <title>Telomerase RNAs in land plants.</title>
        <authorList>
            <person name="Fajkus P."/>
            <person name="Peska V."/>
            <person name="Zavodnik M."/>
            <person name="Fojtova M."/>
            <person name="Fulneckova J."/>
            <person name="Dobias S."/>
            <person name="Kilar A."/>
            <person name="Dvorackova M."/>
            <person name="Zachova D."/>
            <person name="Necasova I."/>
            <person name="Sims J."/>
            <person name="Sykorova E."/>
            <person name="Fajkus J."/>
        </authorList>
    </citation>
    <scope>COMPONENT OF THE TELOMERASE COMPLEX</scope>
</reference>
<reference key="17">
    <citation type="journal article" date="2019" name="Plant J.">
        <title>The plant Pontin and Reptin homologues, RuvBL1 and RuvBL2a, colocalize with TERT and TRB proteins in vivo, and participate in telomerase biogenesis.</title>
        <authorList>
            <person name="Schorova S."/>
            <person name="Fajkus J."/>
            <person name="Zaveska Drabkova L."/>
            <person name="Honys D."/>
            <person name="Schrumpfova P.P."/>
        </authorList>
    </citation>
    <scope>INTERACTION WITH CBF5</scope>
    <scope>SUBCELLULAR LOCATION</scope>
</reference>
<reference key="18">
    <citation type="journal article" date="2019" name="Proc. Natl. Acad. Sci. U.S.A.">
        <title>The conserved structure of plant telomerase RNA provides the missing link for an evolutionary pathway from ciliates to humans.</title>
        <authorList>
            <person name="Song J."/>
            <person name="Logeswaran D."/>
            <person name="Castillo-Gonzalez C."/>
            <person name="Li Y."/>
            <person name="Bose S."/>
            <person name="Aklilu B.B."/>
            <person name="Ma Z."/>
            <person name="Polkhovskiy A."/>
            <person name="Chen J.J."/>
            <person name="Shippen D.E."/>
        </authorList>
    </citation>
    <scope>COMPONENT OF THE TELOMERASE COMPLEX</scope>
</reference>